<feature type="chain" id="PRO_0000405443" description="Cytochrome c oxidase assembly factor 3, mitochondrial">
    <location>
        <begin position="1"/>
        <end position="68"/>
    </location>
</feature>
<feature type="topological domain" description="Mitochondrial matrix" evidence="1">
    <location>
        <begin position="1"/>
        <end position="11"/>
    </location>
</feature>
<feature type="transmembrane region" description="Helical" evidence="2">
    <location>
        <begin position="12"/>
        <end position="34"/>
    </location>
</feature>
<feature type="topological domain" description="Mitochondrial intermembrane" evidence="1">
    <location>
        <begin position="35"/>
        <end position="68"/>
    </location>
</feature>
<dbReference type="EMBL" id="CH981533">
    <property type="protein sequence ID" value="EDK47398.1"/>
    <property type="molecule type" value="Genomic_DNA"/>
</dbReference>
<dbReference type="RefSeq" id="XP_001523353.1">
    <property type="nucleotide sequence ID" value="XM_001523303.1"/>
</dbReference>
<dbReference type="SMR" id="A5E7J0"/>
<dbReference type="FunCoup" id="A5E7J0">
    <property type="interactions" value="23"/>
</dbReference>
<dbReference type="STRING" id="379508.A5E7J0"/>
<dbReference type="GeneID" id="5230321"/>
<dbReference type="KEGG" id="lel:PVL30_005105"/>
<dbReference type="VEuPathDB" id="FungiDB:LELG_05579"/>
<dbReference type="eggNOG" id="ENOG502S440">
    <property type="taxonomic scope" value="Eukaryota"/>
</dbReference>
<dbReference type="HOGENOM" id="CLU_153999_0_0_1"/>
<dbReference type="InParanoid" id="A5E7J0"/>
<dbReference type="OMA" id="WKMTPAM"/>
<dbReference type="OrthoDB" id="10018333at2759"/>
<dbReference type="Proteomes" id="UP000001996">
    <property type="component" value="Unassembled WGS sequence"/>
</dbReference>
<dbReference type="GO" id="GO:0005743">
    <property type="term" value="C:mitochondrial inner membrane"/>
    <property type="evidence" value="ECO:0007669"/>
    <property type="project" value="UniProtKB-SubCell"/>
</dbReference>
<dbReference type="GO" id="GO:0033617">
    <property type="term" value="P:mitochondrial cytochrome c oxidase assembly"/>
    <property type="evidence" value="ECO:0007669"/>
    <property type="project" value="InterPro"/>
</dbReference>
<dbReference type="InterPro" id="IPR041752">
    <property type="entry name" value="Coa3"/>
</dbReference>
<dbReference type="InterPro" id="IPR018628">
    <property type="entry name" value="Coa3_cc"/>
</dbReference>
<dbReference type="PANTHER" id="PTHR15642:SF3">
    <property type="entry name" value="CYTOCHROME C OXIDASE ASSEMBLY FACTOR 3 HOMOLOG, MITOCHONDRIAL"/>
    <property type="match status" value="1"/>
</dbReference>
<dbReference type="PANTHER" id="PTHR15642">
    <property type="entry name" value="CYTOCHROME C OXIDASE ASSEMBLY FACTOR 3, MITOCHONDRIAL"/>
    <property type="match status" value="1"/>
</dbReference>
<dbReference type="Pfam" id="PF09813">
    <property type="entry name" value="Coa3_cc"/>
    <property type="match status" value="1"/>
</dbReference>
<organism>
    <name type="scientific">Lodderomyces elongisporus (strain ATCC 11503 / CBS 2605 / JCM 1781 / NBRC 1676 / NRRL YB-4239)</name>
    <name type="common">Yeast</name>
    <name type="synonym">Saccharomyces elongisporus</name>
    <dbReference type="NCBI Taxonomy" id="379508"/>
    <lineage>
        <taxon>Eukaryota</taxon>
        <taxon>Fungi</taxon>
        <taxon>Dikarya</taxon>
        <taxon>Ascomycota</taxon>
        <taxon>Saccharomycotina</taxon>
        <taxon>Pichiomycetes</taxon>
        <taxon>Debaryomycetaceae</taxon>
        <taxon>Candida/Lodderomyces clade</taxon>
        <taxon>Lodderomyces</taxon>
    </lineage>
</organism>
<comment type="function">
    <text evidence="1">Required for assembly of cytochrome c oxidase (complex IV).</text>
</comment>
<comment type="subunit">
    <text evidence="1">Component of 250-400 kDa complexes called cytochrome oxidase assembly intermediates or COA complexes.</text>
</comment>
<comment type="subcellular location">
    <subcellularLocation>
        <location>Mitochondrion inner membrane</location>
        <topology>Single-pass membrane protein</topology>
    </subcellularLocation>
</comment>
<comment type="similarity">
    <text evidence="3">Belongs to the COA3 family.</text>
</comment>
<gene>
    <name type="primary">COA3</name>
    <name type="ORF">LELG_05579</name>
</gene>
<protein>
    <recommendedName>
        <fullName>Cytochrome c oxidase assembly factor 3, mitochondrial</fullName>
    </recommendedName>
</protein>
<name>COA3_LODEL</name>
<proteinExistence type="inferred from homology"/>
<accession>A5E7J0</accession>
<sequence length="68" mass="8020">MTPALYRVRQPFFWRNTISLFVIGSIPLAAYWYTFTKMTEDEFSDIPIPPISDEELTKLKKEYEAGKQ</sequence>
<evidence type="ECO:0000250" key="1"/>
<evidence type="ECO:0000255" key="2"/>
<evidence type="ECO:0000305" key="3"/>
<reference key="1">
    <citation type="journal article" date="2009" name="Nature">
        <title>Evolution of pathogenicity and sexual reproduction in eight Candida genomes.</title>
        <authorList>
            <person name="Butler G."/>
            <person name="Rasmussen M.D."/>
            <person name="Lin M.F."/>
            <person name="Santos M.A.S."/>
            <person name="Sakthikumar S."/>
            <person name="Munro C.A."/>
            <person name="Rheinbay E."/>
            <person name="Grabherr M."/>
            <person name="Forche A."/>
            <person name="Reedy J.L."/>
            <person name="Agrafioti I."/>
            <person name="Arnaud M.B."/>
            <person name="Bates S."/>
            <person name="Brown A.J.P."/>
            <person name="Brunke S."/>
            <person name="Costanzo M.C."/>
            <person name="Fitzpatrick D.A."/>
            <person name="de Groot P.W.J."/>
            <person name="Harris D."/>
            <person name="Hoyer L.L."/>
            <person name="Hube B."/>
            <person name="Klis F.M."/>
            <person name="Kodira C."/>
            <person name="Lennard N."/>
            <person name="Logue M.E."/>
            <person name="Martin R."/>
            <person name="Neiman A.M."/>
            <person name="Nikolaou E."/>
            <person name="Quail M.A."/>
            <person name="Quinn J."/>
            <person name="Santos M.C."/>
            <person name="Schmitzberger F.F."/>
            <person name="Sherlock G."/>
            <person name="Shah P."/>
            <person name="Silverstein K.A.T."/>
            <person name="Skrzypek M.S."/>
            <person name="Soll D."/>
            <person name="Staggs R."/>
            <person name="Stansfield I."/>
            <person name="Stumpf M.P.H."/>
            <person name="Sudbery P.E."/>
            <person name="Srikantha T."/>
            <person name="Zeng Q."/>
            <person name="Berman J."/>
            <person name="Berriman M."/>
            <person name="Heitman J."/>
            <person name="Gow N.A.R."/>
            <person name="Lorenz M.C."/>
            <person name="Birren B.W."/>
            <person name="Kellis M."/>
            <person name="Cuomo C.A."/>
        </authorList>
    </citation>
    <scope>NUCLEOTIDE SEQUENCE [LARGE SCALE GENOMIC DNA]</scope>
    <source>
        <strain>ATCC 11503 / BCRC 21390 / CBS 2605 / JCM 1781 / NBRC 1676 / NRRL YB-4239</strain>
    </source>
</reference>
<keyword id="KW-0472">Membrane</keyword>
<keyword id="KW-0496">Mitochondrion</keyword>
<keyword id="KW-0999">Mitochondrion inner membrane</keyword>
<keyword id="KW-1185">Reference proteome</keyword>
<keyword id="KW-0812">Transmembrane</keyword>
<keyword id="KW-1133">Transmembrane helix</keyword>